<name>GNL2_ARATH</name>
<protein>
    <recommendedName>
        <fullName>ARF guanine-nucleotide exchange factor GNL2</fullName>
    </recommendedName>
    <alternativeName>
        <fullName>Protein GNOM-like 2</fullName>
    </alternativeName>
</protein>
<dbReference type="EMBL" id="AF296838">
    <property type="status" value="NOT_ANNOTATED_CDS"/>
    <property type="molecule type" value="Genomic_DNA"/>
</dbReference>
<dbReference type="EMBL" id="CP002688">
    <property type="protein sequence ID" value="AED92730.1"/>
    <property type="molecule type" value="Genomic_DNA"/>
</dbReference>
<dbReference type="RefSeq" id="NP_197462.1">
    <property type="nucleotide sequence ID" value="NM_121966.2"/>
</dbReference>
<dbReference type="SMR" id="F4K2K3"/>
<dbReference type="FunCoup" id="F4K2K3">
    <property type="interactions" value="3534"/>
</dbReference>
<dbReference type="STRING" id="3702.F4K2K3"/>
<dbReference type="PaxDb" id="3702-AT5G19610.1"/>
<dbReference type="ProteomicsDB" id="248537"/>
<dbReference type="EnsemblPlants" id="AT5G19610.1">
    <property type="protein sequence ID" value="AT5G19610.1"/>
    <property type="gene ID" value="AT5G19610"/>
</dbReference>
<dbReference type="GeneID" id="832081"/>
<dbReference type="Gramene" id="AT5G19610.1">
    <property type="protein sequence ID" value="AT5G19610.1"/>
    <property type="gene ID" value="AT5G19610"/>
</dbReference>
<dbReference type="KEGG" id="ath:AT5G19610"/>
<dbReference type="Araport" id="AT5G19610"/>
<dbReference type="TAIR" id="AT5G19610">
    <property type="gene designation" value="GNL2"/>
</dbReference>
<dbReference type="eggNOG" id="KOG0928">
    <property type="taxonomic scope" value="Eukaryota"/>
</dbReference>
<dbReference type="HOGENOM" id="CLU_001204_1_0_1"/>
<dbReference type="InParanoid" id="F4K2K3"/>
<dbReference type="OMA" id="HLIYYGT"/>
<dbReference type="PhylomeDB" id="F4K2K3"/>
<dbReference type="PRO" id="PR:F4K2K3"/>
<dbReference type="Proteomes" id="UP000006548">
    <property type="component" value="Chromosome 5"/>
</dbReference>
<dbReference type="ExpressionAtlas" id="F4K2K3">
    <property type="expression patterns" value="baseline and differential"/>
</dbReference>
<dbReference type="GO" id="GO:0005829">
    <property type="term" value="C:cytosol"/>
    <property type="evidence" value="ECO:0007669"/>
    <property type="project" value="UniProtKB-SubCell"/>
</dbReference>
<dbReference type="GO" id="GO:0016020">
    <property type="term" value="C:membrane"/>
    <property type="evidence" value="ECO:0007669"/>
    <property type="project" value="UniProtKB-SubCell"/>
</dbReference>
<dbReference type="GO" id="GO:0090406">
    <property type="term" value="C:pollen tube"/>
    <property type="evidence" value="ECO:0000314"/>
    <property type="project" value="TAIR"/>
</dbReference>
<dbReference type="GO" id="GO:0005085">
    <property type="term" value="F:guanyl-nucleotide exchange factor activity"/>
    <property type="evidence" value="ECO:0007669"/>
    <property type="project" value="UniProtKB-KW"/>
</dbReference>
<dbReference type="GO" id="GO:0009846">
    <property type="term" value="P:pollen germination"/>
    <property type="evidence" value="ECO:0000315"/>
    <property type="project" value="TAIR"/>
</dbReference>
<dbReference type="GO" id="GO:0015031">
    <property type="term" value="P:protein transport"/>
    <property type="evidence" value="ECO:0007669"/>
    <property type="project" value="UniProtKB-KW"/>
</dbReference>
<dbReference type="GO" id="GO:0032012">
    <property type="term" value="P:regulation of ARF protein signal transduction"/>
    <property type="evidence" value="ECO:0007669"/>
    <property type="project" value="InterPro"/>
</dbReference>
<dbReference type="CDD" id="cd00171">
    <property type="entry name" value="Sec7"/>
    <property type="match status" value="1"/>
</dbReference>
<dbReference type="FunFam" id="1.10.1000.11:FF:000002">
    <property type="entry name" value="Cytohesin 1"/>
    <property type="match status" value="1"/>
</dbReference>
<dbReference type="Gene3D" id="1.10.220.20">
    <property type="match status" value="1"/>
</dbReference>
<dbReference type="Gene3D" id="1.10.1000.11">
    <property type="entry name" value="Arf Nucleotide-binding Site Opener,domain 2"/>
    <property type="match status" value="1"/>
</dbReference>
<dbReference type="InterPro" id="IPR016024">
    <property type="entry name" value="ARM-type_fold"/>
</dbReference>
<dbReference type="InterPro" id="IPR032691">
    <property type="entry name" value="Mon2/Sec7/BIG1-like_HUS"/>
</dbReference>
<dbReference type="InterPro" id="IPR023394">
    <property type="entry name" value="Sec7_C_sf"/>
</dbReference>
<dbReference type="InterPro" id="IPR000904">
    <property type="entry name" value="Sec7_dom"/>
</dbReference>
<dbReference type="InterPro" id="IPR035999">
    <property type="entry name" value="Sec7_dom_sf"/>
</dbReference>
<dbReference type="PANTHER" id="PTHR10663:SF322">
    <property type="entry name" value="ARF GUANINE-NUCLEOTIDE EXCHANGE FACTOR GNL2"/>
    <property type="match status" value="1"/>
</dbReference>
<dbReference type="PANTHER" id="PTHR10663">
    <property type="entry name" value="GUANYL-NUCLEOTIDE EXCHANGE FACTOR"/>
    <property type="match status" value="1"/>
</dbReference>
<dbReference type="Pfam" id="PF01369">
    <property type="entry name" value="Sec7"/>
    <property type="match status" value="1"/>
</dbReference>
<dbReference type="Pfam" id="PF12783">
    <property type="entry name" value="Sec7-like_HUS"/>
    <property type="match status" value="1"/>
</dbReference>
<dbReference type="SMART" id="SM00222">
    <property type="entry name" value="Sec7"/>
    <property type="match status" value="1"/>
</dbReference>
<dbReference type="SUPFAM" id="SSF48371">
    <property type="entry name" value="ARM repeat"/>
    <property type="match status" value="1"/>
</dbReference>
<dbReference type="SUPFAM" id="SSF48425">
    <property type="entry name" value="Sec7 domain"/>
    <property type="match status" value="1"/>
</dbReference>
<dbReference type="PROSITE" id="PS50190">
    <property type="entry name" value="SEC7"/>
    <property type="match status" value="1"/>
</dbReference>
<feature type="chain" id="PRO_0000420949" description="ARF guanine-nucleotide exchange factor GNL2">
    <location>
        <begin position="1"/>
        <end position="1375"/>
    </location>
</feature>
<feature type="domain" description="SEC7" evidence="2">
    <location>
        <begin position="486"/>
        <end position="676"/>
    </location>
</feature>
<feature type="active site" evidence="1">
    <location>
        <position position="590"/>
    </location>
</feature>
<keyword id="KW-0963">Cytoplasm</keyword>
<keyword id="KW-0344">Guanine-nucleotide releasing factor</keyword>
<keyword id="KW-0472">Membrane</keyword>
<keyword id="KW-0653">Protein transport</keyword>
<keyword id="KW-1185">Reference proteome</keyword>
<keyword id="KW-0813">Transport</keyword>
<evidence type="ECO:0000250" key="1"/>
<evidence type="ECO:0000255" key="2">
    <source>
        <dbReference type="PROSITE-ProRule" id="PRU00189"/>
    </source>
</evidence>
<evidence type="ECO:0000269" key="3">
    <source>
    </source>
</evidence>
<accession>F4K2K3</accession>
<gene>
    <name type="primary">GNL2</name>
    <name type="synonym">GBF2</name>
    <name type="ordered locus">At5g19610</name>
    <name type="ORF">T29J13</name>
</gene>
<comment type="function">
    <text evidence="3">Activates the ARF proteins by exchanging bound GDP for free GTP. Plays a role in vesicular protein sorting. Essential for pollen germination.</text>
</comment>
<comment type="subunit">
    <text evidence="1">Homodimer.</text>
</comment>
<comment type="subcellular location">
    <subcellularLocation>
        <location>Cytoplasm</location>
        <location>Cytosol</location>
    </subcellularLocation>
    <subcellularLocation>
        <location>Membrane</location>
        <topology>Peripheral membrane protein</topology>
        <orientation>Cytoplasmic side</orientation>
    </subcellularLocation>
    <text>Soluble and partially membrane-bound.</text>
</comment>
<comment type="tissue specificity">
    <text evidence="3">Preferentially expressed in mature pollen grains and growing pollen tubes.</text>
</comment>
<comment type="disruption phenotype">
    <text evidence="3">Failure of pollen germination.</text>
</comment>
<sequence length="1375" mass="156243">MDRIAVRAKRKELGISCMLNTEVGAVLAVIRRPLSESYLSPQETDHCDSSVQQSLKSLRALIFNPQQDWRTIDPSVYLSPFLEVIQSDEIPASATAVALSSILKILKIEIFDEKTPGAKDAMNSIVSGITSCRLEKTDLVSEDAVMMRILQVLTGIMKHPSSELLEDQAVCTIVNTCFQVVQQSTGRGDLLQRNGRYTMHELIQIIFSRLPDFEVRGDEGGEDSESDTDEIDMSGGYGIRCCIDIFHFLCSLLNVVEVVENLEGTNVHTADEDVQIFALVLINSAIELSGDAIGQHPKLLRMVQDDLFHHLIHYGASSSPLVLSMICSCILNIYHFLRKFMRLQLEAFFSFVLLRVTAFTGFLPLQEVALEGLINFCRQPAFIVEAYVNYDCDPMCRNIFEETGKVLCRHTFPTSGPLTSIQIQAFEGLVILIHNIADNMDREEDEGNEEDDNNSNVIKPSPVEIHEYIPFWIDKPKEDFETWVDHIRVRKAQKRKLAIAANHFNRDEKKGLEYLKYNYLVSDPLDPMALASFFRFTPGLDKTMIGDYLGDPDELHLSVLRSFTHTFEFTGMNLDTALRTFLESFRLPGESQKIERMIEAFSERFYDQQSSDIFASKDTVHILCYSLIMLNTDQHNPQVRRKMTEDEFIRNNRAINAGNDLPKEYLSELFQSIATNAFALSTHSGPVEMNPNRWIELMNRTKTTQPFSLCQFDRRIGRDMFATIAGPSIAAVSAFFEHSDDDEVLHECVDAMISIARVAQYGLEDILDELIASFCKFTTLLNPYTTPEETLFAFSHDMKPRMATLAVFTLANTFGDSIRGGWRNIVDCLLKLRKLQLLPQSVIEFEINEENGGSESDMNNVSSQDTKFNRRQGSSLMGRFSHFLALDNVEESVALGMSEFEQNLKVIKQCRIGQIFSKSSVLPDVAVLNLGRSLIYAAAGKGQKFSTAIEEEETVKFCWDLIITIALSNVHRFNMFWPSYHEYLLNVANFPLFSPIPFVEKGLPGLFRVCIKILASNLQDHLPEELIFRSLTIMWKIDKEIIETCYDTITEFVSKIIIDYSANLHTNIGWKSVLQLLSLCGRHPETKEQAVDALIGLMSFNASHLSQSSYAYCIDCAFSFVALRNSSVEKNLKILDLMADSVTMLVKWYKTASTDTANSYSPASNTSSSSSMEENNLRGVNFVHHLFLKLSEAFRKTTLARREEIRNRAVTSLEKSFTMGHEDLGFTPSGCIYCIDHVIFPTIDDLHEKLLDYSRRENAEREMRSMEGTLKIAMKVLMNVFLVYLEQIVESAEFRTFWLGVLRRMDTCMKADLGEYGDNKLQEVVPELLTTMIGTMKEKEILVQKEDDDLWEITYIQIQWIAPALKDELFPDEEI</sequence>
<reference key="1">
    <citation type="journal article" date="2000" name="Nature">
        <title>Sequence and analysis of chromosome 5 of the plant Arabidopsis thaliana.</title>
        <authorList>
            <person name="Tabata S."/>
            <person name="Kaneko T."/>
            <person name="Nakamura Y."/>
            <person name="Kotani H."/>
            <person name="Kato T."/>
            <person name="Asamizu E."/>
            <person name="Miyajima N."/>
            <person name="Sasamoto S."/>
            <person name="Kimura T."/>
            <person name="Hosouchi T."/>
            <person name="Kawashima K."/>
            <person name="Kohara M."/>
            <person name="Matsumoto M."/>
            <person name="Matsuno A."/>
            <person name="Muraki A."/>
            <person name="Nakayama S."/>
            <person name="Nakazaki N."/>
            <person name="Naruo K."/>
            <person name="Okumura S."/>
            <person name="Shinpo S."/>
            <person name="Takeuchi C."/>
            <person name="Wada T."/>
            <person name="Watanabe A."/>
            <person name="Yamada M."/>
            <person name="Yasuda M."/>
            <person name="Sato S."/>
            <person name="de la Bastide M."/>
            <person name="Huang E."/>
            <person name="Spiegel L."/>
            <person name="Gnoj L."/>
            <person name="O'Shaughnessy A."/>
            <person name="Preston R."/>
            <person name="Habermann K."/>
            <person name="Murray J."/>
            <person name="Johnson D."/>
            <person name="Rohlfing T."/>
            <person name="Nelson J."/>
            <person name="Stoneking T."/>
            <person name="Pepin K."/>
            <person name="Spieth J."/>
            <person name="Sekhon M."/>
            <person name="Armstrong J."/>
            <person name="Becker M."/>
            <person name="Belter E."/>
            <person name="Cordum H."/>
            <person name="Cordes M."/>
            <person name="Courtney L."/>
            <person name="Courtney W."/>
            <person name="Dante M."/>
            <person name="Du H."/>
            <person name="Edwards J."/>
            <person name="Fryman J."/>
            <person name="Haakensen B."/>
            <person name="Lamar E."/>
            <person name="Latreille P."/>
            <person name="Leonard S."/>
            <person name="Meyer R."/>
            <person name="Mulvaney E."/>
            <person name="Ozersky P."/>
            <person name="Riley A."/>
            <person name="Strowmatt C."/>
            <person name="Wagner-McPherson C."/>
            <person name="Wollam A."/>
            <person name="Yoakum M."/>
            <person name="Bell M."/>
            <person name="Dedhia N."/>
            <person name="Parnell L."/>
            <person name="Shah R."/>
            <person name="Rodriguez M."/>
            <person name="Hoon See L."/>
            <person name="Vil D."/>
            <person name="Baker J."/>
            <person name="Kirchoff K."/>
            <person name="Toth K."/>
            <person name="King L."/>
            <person name="Bahret A."/>
            <person name="Miller B."/>
            <person name="Marra M.A."/>
            <person name="Martienssen R."/>
            <person name="McCombie W.R."/>
            <person name="Wilson R.K."/>
            <person name="Murphy G."/>
            <person name="Bancroft I."/>
            <person name="Volckaert G."/>
            <person name="Wambutt R."/>
            <person name="Duesterhoeft A."/>
            <person name="Stiekema W."/>
            <person name="Pohl T."/>
            <person name="Entian K.-D."/>
            <person name="Terryn N."/>
            <person name="Hartley N."/>
            <person name="Bent E."/>
            <person name="Johnson S."/>
            <person name="Langham S.-A."/>
            <person name="McCullagh B."/>
            <person name="Robben J."/>
            <person name="Grymonprez B."/>
            <person name="Zimmermann W."/>
            <person name="Ramsperger U."/>
            <person name="Wedler H."/>
            <person name="Balke K."/>
            <person name="Wedler E."/>
            <person name="Peters S."/>
            <person name="van Staveren M."/>
            <person name="Dirkse W."/>
            <person name="Mooijman P."/>
            <person name="Klein Lankhorst R."/>
            <person name="Weitzenegger T."/>
            <person name="Bothe G."/>
            <person name="Rose M."/>
            <person name="Hauf J."/>
            <person name="Berneiser S."/>
            <person name="Hempel S."/>
            <person name="Feldpausch M."/>
            <person name="Lamberth S."/>
            <person name="Villarroel R."/>
            <person name="Gielen J."/>
            <person name="Ardiles W."/>
            <person name="Bents O."/>
            <person name="Lemcke K."/>
            <person name="Kolesov G."/>
            <person name="Mayer K.F.X."/>
            <person name="Rudd S."/>
            <person name="Schoof H."/>
            <person name="Schueller C."/>
            <person name="Zaccaria P."/>
            <person name="Mewes H.-W."/>
            <person name="Bevan M."/>
            <person name="Fransz P.F."/>
        </authorList>
    </citation>
    <scope>NUCLEOTIDE SEQUENCE [LARGE SCALE GENOMIC DNA]</scope>
    <source>
        <strain>cv. Columbia</strain>
    </source>
</reference>
<reference key="2">
    <citation type="journal article" date="2017" name="Plant J.">
        <title>Araport11: a complete reannotation of the Arabidopsis thaliana reference genome.</title>
        <authorList>
            <person name="Cheng C.Y."/>
            <person name="Krishnakumar V."/>
            <person name="Chan A.P."/>
            <person name="Thibaud-Nissen F."/>
            <person name="Schobel S."/>
            <person name="Town C.D."/>
        </authorList>
    </citation>
    <scope>GENOME REANNOTATION</scope>
    <source>
        <strain>cv. Columbia</strain>
    </source>
</reference>
<reference key="3">
    <citation type="journal article" date="2003" name="Cell">
        <title>The Arabidopsis GNOM ARF-GEF mediates endosomal recycling, auxin transport, and auxin-dependent plant growth.</title>
        <authorList>
            <person name="Geldner N."/>
            <person name="Anders N."/>
            <person name="Wolters H."/>
            <person name="Keicher J."/>
            <person name="Kornberger W."/>
            <person name="Muller P."/>
            <person name="Delbarre A."/>
            <person name="Ueda T."/>
            <person name="Nakano A."/>
            <person name="Juergens G."/>
        </authorList>
    </citation>
    <scope>GENE FAMILY</scope>
</reference>
<reference key="4">
    <citation type="journal article" date="2004" name="Mol. Biol. Cell">
        <title>Phylogenetic analysis of Sec7-domain-containing Arf nucleotide exchangers.</title>
        <authorList>
            <person name="Cox R."/>
            <person name="Mason-Gamer R.J."/>
            <person name="Jackson C.L."/>
            <person name="Segev N."/>
        </authorList>
    </citation>
    <scope>GENE FAMILY</scope>
    <scope>NOMENCLATURE</scope>
</reference>
<reference key="5">
    <citation type="journal article" date="2007" name="Nature">
        <title>Functional diversification of closely related ARF-GEFs in protein secretion and recycling.</title>
        <authorList>
            <person name="Richter S."/>
            <person name="Geldner N."/>
            <person name="Schrader J."/>
            <person name="Wolters H."/>
            <person name="Stierhof Y.D."/>
            <person name="Rios G."/>
            <person name="Koncz C."/>
            <person name="Robinson D.G."/>
            <person name="Juergens G."/>
        </authorList>
    </citation>
    <scope>GENE FAMILY</scope>
</reference>
<reference key="6">
    <citation type="journal article" date="2009" name="J. Integr. Plant Biol.">
        <title>GNOM-LIKE 2, encoding an adenosine diphosphate-ribosylation factor-guanine nucleotide exchange factor protein homologous to GNOM and GNL1, is essential for pollen germination in Arabidopsis.</title>
        <authorList>
            <person name="Jia D.J."/>
            <person name="Cao X."/>
            <person name="Wang W."/>
            <person name="Tan X.Y."/>
            <person name="Zhang X.Q."/>
            <person name="Chen L.Q."/>
            <person name="Ye D."/>
        </authorList>
    </citation>
    <scope>FUNCTION</scope>
    <scope>DISRUPTION PHENOTYPE</scope>
    <scope>TISSUE SPECIFICITY</scope>
</reference>
<organism>
    <name type="scientific">Arabidopsis thaliana</name>
    <name type="common">Mouse-ear cress</name>
    <dbReference type="NCBI Taxonomy" id="3702"/>
    <lineage>
        <taxon>Eukaryota</taxon>
        <taxon>Viridiplantae</taxon>
        <taxon>Streptophyta</taxon>
        <taxon>Embryophyta</taxon>
        <taxon>Tracheophyta</taxon>
        <taxon>Spermatophyta</taxon>
        <taxon>Magnoliopsida</taxon>
        <taxon>eudicotyledons</taxon>
        <taxon>Gunneridae</taxon>
        <taxon>Pentapetalae</taxon>
        <taxon>rosids</taxon>
        <taxon>malvids</taxon>
        <taxon>Brassicales</taxon>
        <taxon>Brassicaceae</taxon>
        <taxon>Camelineae</taxon>
        <taxon>Arabidopsis</taxon>
    </lineage>
</organism>
<proteinExistence type="evidence at transcript level"/>